<organism>
    <name type="scientific">Chaetomium thermophilum (strain DSM 1495 / CBS 144.50 / IMI 039719)</name>
    <name type="common">Thermochaetoides thermophila</name>
    <dbReference type="NCBI Taxonomy" id="759272"/>
    <lineage>
        <taxon>Eukaryota</taxon>
        <taxon>Fungi</taxon>
        <taxon>Dikarya</taxon>
        <taxon>Ascomycota</taxon>
        <taxon>Pezizomycotina</taxon>
        <taxon>Sordariomycetes</taxon>
        <taxon>Sordariomycetidae</taxon>
        <taxon>Sordariales</taxon>
        <taxon>Chaetomiaceae</taxon>
        <taxon>Thermochaetoides</taxon>
    </lineage>
</organism>
<gene>
    <name type="primary">NUP57</name>
    <name type="ORF">CTHT_0010940</name>
</gene>
<keyword id="KW-0002">3D-structure</keyword>
<keyword id="KW-0175">Coiled coil</keyword>
<keyword id="KW-0472">Membrane</keyword>
<keyword id="KW-0509">mRNA transport</keyword>
<keyword id="KW-0906">Nuclear pore complex</keyword>
<keyword id="KW-0539">Nucleus</keyword>
<keyword id="KW-0653">Protein transport</keyword>
<keyword id="KW-1185">Reference proteome</keyword>
<keyword id="KW-0677">Repeat</keyword>
<keyword id="KW-0811">Translocation</keyword>
<keyword id="KW-0813">Transport</keyword>
<proteinExistence type="evidence at protein level"/>
<evidence type="ECO:0000250" key="1">
    <source>
        <dbReference type="UniProtKB" id="P48837"/>
    </source>
</evidence>
<evidence type="ECO:0000255" key="2"/>
<evidence type="ECO:0000256" key="3">
    <source>
        <dbReference type="SAM" id="MobiDB-lite"/>
    </source>
</evidence>
<evidence type="ECO:0000303" key="4">
    <source>
    </source>
</evidence>
<evidence type="ECO:0000305" key="5"/>
<evidence type="ECO:0000305" key="6">
    <source>
    </source>
</evidence>
<evidence type="ECO:0007829" key="7">
    <source>
        <dbReference type="PDB" id="5CWT"/>
    </source>
</evidence>
<name>NUP57_CHATD</name>
<comment type="function">
    <text evidence="1">Functions as a component of the nuclear pore complex (NPC). NPC components, collectively referred to as nucleoporins (NUPs), can play the role of both NPC structural components and of docking or interaction partners for transiently associated nuclear transport factors. Active directional transport is assured by both, a Phe-Gly (FG) repeat affinity gradient for these transport factors across the NPC and a transport cofactor concentration gradient across the nuclear envelope (GSP1 and GSP2 GTPases associated predominantly with GTP in the nucleus, with GDP in the cytoplasm). NUP57 plays an important role in several nuclear transport pathways including poly(A)+ RNA, tRNA, and pre-ribosome transport.</text>
</comment>
<comment type="subunit">
    <text evidence="1 6">Component of the nuclear pore complex (NPC). NPC constitutes the exclusive means of nucleocytoplasmic transport. NPCs allow the passive diffusion of ions and small molecules and the active, nuclear transport receptor-mediated bidirectional transport of macromolecules such as proteins, RNAs, ribonucleoparticles (RNPs), and ribosomal subunits across the nuclear envelope. Due to its 8-fold rotational symmetry, all subunits are present with 8 copies or multiples thereof.</text>
</comment>
<comment type="subcellular location">
    <subcellularLocation>
        <location evidence="1">Nucleus</location>
        <location evidence="1">Nuclear pore complex</location>
    </subcellularLocation>
    <subcellularLocation>
        <location evidence="1">Nucleus membrane</location>
        <topology evidence="1">Peripheral membrane protein</topology>
        <orientation evidence="1">Cytoplasmic side</orientation>
    </subcellularLocation>
    <subcellularLocation>
        <location evidence="1">Nucleus membrane</location>
        <topology evidence="1">Peripheral membrane protein</topology>
        <orientation evidence="1">Nucleoplasmic side</orientation>
    </subcellularLocation>
    <text evidence="1">Symmetric distribution.</text>
</comment>
<comment type="domain">
    <text evidence="1">Contains FG repeats. FG repeats are interaction sites for karyopherins (importins, exportins) and form probably an affinity gradient, guiding the transport proteins unidirectionally with their cargo through the NPC. FG repeat regions are highly flexible and lack ordered secondary structure. The overall conservation of FG repeats regarding exact sequence, spacing, and repeat unit length is limited. FG repeat types and their physico-chemical environment change across the NPC from the nucleoplasmic to the cytoplasmic side: GLFG repeats are especially abundant in NUPs in the central region (lacking a charged environment but are enriched in Ser, Thr, Gln, and Asn).</text>
</comment>
<comment type="similarity">
    <text evidence="5">Belongs to the nucleoporin GLFG family.</text>
</comment>
<dbReference type="EMBL" id="GL988039">
    <property type="protein sequence ID" value="EGS22622.1"/>
    <property type="molecule type" value="Genomic_DNA"/>
</dbReference>
<dbReference type="EMBL" id="JF276283">
    <property type="protein sequence ID" value="AEL00680.1"/>
    <property type="molecule type" value="Genomic_DNA"/>
</dbReference>
<dbReference type="RefSeq" id="XP_006691614.1">
    <property type="nucleotide sequence ID" value="XM_006691551.1"/>
</dbReference>
<dbReference type="PDB" id="5CWS">
    <property type="method" value="X-ray"/>
    <property type="resolution" value="3.77 A"/>
    <property type="chains" value="E/K=74-319"/>
</dbReference>
<dbReference type="PDB" id="5CWT">
    <property type="method" value="X-ray"/>
    <property type="resolution" value="2.50 A"/>
    <property type="chains" value="A/B/C/D=265-317"/>
</dbReference>
<dbReference type="PDBsum" id="5CWS"/>
<dbReference type="PDBsum" id="5CWT"/>
<dbReference type="SMR" id="G0S0R2"/>
<dbReference type="DIP" id="DIP-61840N"/>
<dbReference type="IntAct" id="G0S0R2">
    <property type="interactions" value="3"/>
</dbReference>
<dbReference type="STRING" id="759272.G0S0R2"/>
<dbReference type="TCDB" id="1.I.1.1.2">
    <property type="family name" value="the nuclear pore complex (npc) family"/>
</dbReference>
<dbReference type="ABCD" id="G0S0R2">
    <property type="antibodies" value="1 sequenced antibody"/>
</dbReference>
<dbReference type="GeneID" id="18255132"/>
<dbReference type="KEGG" id="cthr:CTHT_0010940"/>
<dbReference type="eggNOG" id="KOG3091">
    <property type="taxonomic scope" value="Eukaryota"/>
</dbReference>
<dbReference type="HOGENOM" id="CLU_023804_0_0_1"/>
<dbReference type="OMA" id="SCVFKHY"/>
<dbReference type="OrthoDB" id="6162375at2759"/>
<dbReference type="EvolutionaryTrace" id="G0S0R2"/>
<dbReference type="Proteomes" id="UP000008066">
    <property type="component" value="Unassembled WGS sequence"/>
</dbReference>
<dbReference type="GO" id="GO:0031965">
    <property type="term" value="C:nuclear membrane"/>
    <property type="evidence" value="ECO:0007669"/>
    <property type="project" value="UniProtKB-SubCell"/>
</dbReference>
<dbReference type="GO" id="GO:0044613">
    <property type="term" value="C:nuclear pore central transport channel"/>
    <property type="evidence" value="ECO:0007669"/>
    <property type="project" value="TreeGrafter"/>
</dbReference>
<dbReference type="GO" id="GO:0017056">
    <property type="term" value="F:structural constituent of nuclear pore"/>
    <property type="evidence" value="ECO:0007669"/>
    <property type="project" value="TreeGrafter"/>
</dbReference>
<dbReference type="GO" id="GO:0051028">
    <property type="term" value="P:mRNA transport"/>
    <property type="evidence" value="ECO:0007669"/>
    <property type="project" value="UniProtKB-KW"/>
</dbReference>
<dbReference type="GO" id="GO:0006607">
    <property type="term" value="P:NLS-bearing protein import into nucleus"/>
    <property type="evidence" value="ECO:0007669"/>
    <property type="project" value="TreeGrafter"/>
</dbReference>
<dbReference type="GO" id="GO:0006999">
    <property type="term" value="P:nuclear pore organization"/>
    <property type="evidence" value="ECO:0007669"/>
    <property type="project" value="TreeGrafter"/>
</dbReference>
<dbReference type="GO" id="GO:0036228">
    <property type="term" value="P:protein localization to nuclear inner membrane"/>
    <property type="evidence" value="ECO:0007669"/>
    <property type="project" value="TreeGrafter"/>
</dbReference>
<dbReference type="Gene3D" id="1.20.5.3600">
    <property type="match status" value="1"/>
</dbReference>
<dbReference type="Gene3D" id="1.20.5.490">
    <property type="entry name" value="Single helix bin"/>
    <property type="match status" value="1"/>
</dbReference>
<dbReference type="InterPro" id="IPR024864">
    <property type="entry name" value="Nup54/Nup57/Nup44"/>
</dbReference>
<dbReference type="InterPro" id="IPR025712">
    <property type="entry name" value="Nup54_alpha-helical_dom"/>
</dbReference>
<dbReference type="PANTHER" id="PTHR13000">
    <property type="entry name" value="NUCLEOPORIN P54"/>
    <property type="match status" value="1"/>
</dbReference>
<dbReference type="PANTHER" id="PTHR13000:SF0">
    <property type="entry name" value="NUCLEOPORIN P54"/>
    <property type="match status" value="1"/>
</dbReference>
<dbReference type="Pfam" id="PF13874">
    <property type="entry name" value="Nup54"/>
    <property type="match status" value="1"/>
</dbReference>
<dbReference type="Pfam" id="PF18570">
    <property type="entry name" value="Nup54_57_C"/>
    <property type="match status" value="1"/>
</dbReference>
<accession>G0S0R2</accession>
<accession>G0ZGU2</accession>
<reference key="1">
    <citation type="journal article" date="2011" name="Cell">
        <title>Insight into structure and assembly of the nuclear pore complex by utilizing the genome of a eukaryotic thermophile.</title>
        <authorList>
            <person name="Amlacher S."/>
            <person name="Sarges P."/>
            <person name="Flemming D."/>
            <person name="van Noort V."/>
            <person name="Kunze R."/>
            <person name="Devos D.P."/>
            <person name="Arumugam M."/>
            <person name="Bork P."/>
            <person name="Hurt E."/>
        </authorList>
    </citation>
    <scope>NUCLEOTIDE SEQUENCE [LARGE SCALE GENOMIC DNA]</scope>
    <source>
        <strain>DSM 1495 / CBS 144.50 / IMI 039719</strain>
    </source>
</reference>
<sequence length="326" mass="36922">MFSSLNTRPAGQSLFGANTGGGLFGQSLANQPQQQQQPLQQQQQQAAPALGQSQINQNQQLGGSLWQPGSLTAYQKPIPEQIKLIVDKWNPNHPNCAFKTYLYNKVDEHTVPLYGPGPNEDPKEWEEALQRKPAPNFIPVLCSGFPSIVARLMLQRRVITEFNNKLHQINASLDAILSRHDLDHTVRAFNARRRHAELSRRCLHLAARVQVLRNRGYALSGDEDELKQKLQQIDKTLNDPAQGSRLEELWSRLIVLRGYAEDLKDQINQAGITESDGLGEEIEAKAKKILEDYDKQLQHLKKQVEEAKKDFEEWEKQHNPAPAPAR</sequence>
<feature type="chain" id="PRO_0000433177" description="Nucleoporin NUP57">
    <location>
        <begin position="1"/>
        <end position="326"/>
    </location>
</feature>
<feature type="repeat" description="SLFG">
    <location>
        <begin position="13"/>
        <end position="17"/>
    </location>
</feature>
<feature type="repeat" description="GLFG">
    <location>
        <begin position="22"/>
        <end position="25"/>
    </location>
</feature>
<feature type="region of interest" description="Disordered" evidence="3">
    <location>
        <begin position="1"/>
        <end position="52"/>
    </location>
</feature>
<feature type="coiled-coil region" evidence="2">
    <location>
        <begin position="218"/>
        <end position="239"/>
    </location>
</feature>
<feature type="coiled-coil region" evidence="2">
    <location>
        <begin position="280"/>
        <end position="321"/>
    </location>
</feature>
<feature type="compositionally biased region" description="Polar residues" evidence="3">
    <location>
        <begin position="1"/>
        <end position="10"/>
    </location>
</feature>
<feature type="compositionally biased region" description="Low complexity" evidence="3">
    <location>
        <begin position="25"/>
        <end position="52"/>
    </location>
</feature>
<feature type="helix" evidence="7">
    <location>
        <begin position="278"/>
        <end position="314"/>
    </location>
</feature>
<protein>
    <recommendedName>
        <fullName evidence="4">Nucleoporin NUP57</fullName>
    </recommendedName>
    <alternativeName>
        <fullName>Nuclear pore protein NUP57</fullName>
    </alternativeName>
</protein>